<sequence length="225" mass="24209">MTPRLRLQPESVGIGMTSQRVRDRLVERLRESGIQDEATLNAVRTVPRHLFIDEALASRAYEDTALPIGHGQTISQPWVVARMTEAVLQVAPKKVLEVGTGSGYQGAILAALGLEVYTVERIGDLLRQARKRFRHLGMNVRSKHDDGRIGWPEHGPYDAIVVTAAAPALVDALVDQLAVGGRLVAPVGGASSQSLVQLTRGADGEIAQEVLAPVTFVPLLSGMLD</sequence>
<evidence type="ECO:0000255" key="1">
    <source>
        <dbReference type="HAMAP-Rule" id="MF_00090"/>
    </source>
</evidence>
<organism>
    <name type="scientific">Xanthomonas campestris pv. campestris (strain ATCC 33913 / DSM 3586 / NCPPB 528 / LMG 568 / P 25)</name>
    <dbReference type="NCBI Taxonomy" id="190485"/>
    <lineage>
        <taxon>Bacteria</taxon>
        <taxon>Pseudomonadati</taxon>
        <taxon>Pseudomonadota</taxon>
        <taxon>Gammaproteobacteria</taxon>
        <taxon>Lysobacterales</taxon>
        <taxon>Lysobacteraceae</taxon>
        <taxon>Xanthomonas</taxon>
    </lineage>
</organism>
<dbReference type="EC" id="2.1.1.77" evidence="1"/>
<dbReference type="EMBL" id="AE008922">
    <property type="protein sequence ID" value="AAM41001.1"/>
    <property type="molecule type" value="Genomic_DNA"/>
</dbReference>
<dbReference type="RefSeq" id="NP_637077.1">
    <property type="nucleotide sequence ID" value="NC_003902.1"/>
</dbReference>
<dbReference type="RefSeq" id="WP_011036884.1">
    <property type="nucleotide sequence ID" value="NC_003902.1"/>
</dbReference>
<dbReference type="SMR" id="Q8P9Y6"/>
<dbReference type="STRING" id="190485.XCC1707"/>
<dbReference type="EnsemblBacteria" id="AAM41001">
    <property type="protein sequence ID" value="AAM41001"/>
    <property type="gene ID" value="XCC1707"/>
</dbReference>
<dbReference type="KEGG" id="xcc:XCC1707"/>
<dbReference type="PATRIC" id="fig|190485.4.peg.1821"/>
<dbReference type="eggNOG" id="COG2518">
    <property type="taxonomic scope" value="Bacteria"/>
</dbReference>
<dbReference type="HOGENOM" id="CLU_055432_2_0_6"/>
<dbReference type="OrthoDB" id="9810066at2"/>
<dbReference type="Proteomes" id="UP000001010">
    <property type="component" value="Chromosome"/>
</dbReference>
<dbReference type="GO" id="GO:0005737">
    <property type="term" value="C:cytoplasm"/>
    <property type="evidence" value="ECO:0000318"/>
    <property type="project" value="GO_Central"/>
</dbReference>
<dbReference type="GO" id="GO:0004719">
    <property type="term" value="F:protein-L-isoaspartate (D-aspartate) O-methyltransferase activity"/>
    <property type="evidence" value="ECO:0000318"/>
    <property type="project" value="GO_Central"/>
</dbReference>
<dbReference type="GO" id="GO:0032259">
    <property type="term" value="P:methylation"/>
    <property type="evidence" value="ECO:0007669"/>
    <property type="project" value="UniProtKB-KW"/>
</dbReference>
<dbReference type="GO" id="GO:0036211">
    <property type="term" value="P:protein modification process"/>
    <property type="evidence" value="ECO:0007669"/>
    <property type="project" value="UniProtKB-UniRule"/>
</dbReference>
<dbReference type="GO" id="GO:0030091">
    <property type="term" value="P:protein repair"/>
    <property type="evidence" value="ECO:0007669"/>
    <property type="project" value="UniProtKB-UniRule"/>
</dbReference>
<dbReference type="CDD" id="cd02440">
    <property type="entry name" value="AdoMet_MTases"/>
    <property type="match status" value="1"/>
</dbReference>
<dbReference type="FunFam" id="3.40.50.150:FF:000010">
    <property type="entry name" value="Protein-L-isoaspartate O-methyltransferase"/>
    <property type="match status" value="1"/>
</dbReference>
<dbReference type="Gene3D" id="3.40.50.150">
    <property type="entry name" value="Vaccinia Virus protein VP39"/>
    <property type="match status" value="1"/>
</dbReference>
<dbReference type="HAMAP" id="MF_00090">
    <property type="entry name" value="PIMT"/>
    <property type="match status" value="1"/>
</dbReference>
<dbReference type="InterPro" id="IPR000682">
    <property type="entry name" value="PCMT"/>
</dbReference>
<dbReference type="InterPro" id="IPR029063">
    <property type="entry name" value="SAM-dependent_MTases_sf"/>
</dbReference>
<dbReference type="NCBIfam" id="TIGR00080">
    <property type="entry name" value="pimt"/>
    <property type="match status" value="1"/>
</dbReference>
<dbReference type="NCBIfam" id="NF001453">
    <property type="entry name" value="PRK00312.1"/>
    <property type="match status" value="1"/>
</dbReference>
<dbReference type="PANTHER" id="PTHR11579">
    <property type="entry name" value="PROTEIN-L-ISOASPARTATE O-METHYLTRANSFERASE"/>
    <property type="match status" value="1"/>
</dbReference>
<dbReference type="PANTHER" id="PTHR11579:SF0">
    <property type="entry name" value="PROTEIN-L-ISOASPARTATE(D-ASPARTATE) O-METHYLTRANSFERASE"/>
    <property type="match status" value="1"/>
</dbReference>
<dbReference type="Pfam" id="PF01135">
    <property type="entry name" value="PCMT"/>
    <property type="match status" value="1"/>
</dbReference>
<dbReference type="SUPFAM" id="SSF53335">
    <property type="entry name" value="S-adenosyl-L-methionine-dependent methyltransferases"/>
    <property type="match status" value="1"/>
</dbReference>
<dbReference type="PROSITE" id="PS01279">
    <property type="entry name" value="PCMT"/>
    <property type="match status" value="1"/>
</dbReference>
<protein>
    <recommendedName>
        <fullName evidence="1">Protein-L-isoaspartate O-methyltransferase</fullName>
        <ecNumber evidence="1">2.1.1.77</ecNumber>
    </recommendedName>
    <alternativeName>
        <fullName evidence="1">L-isoaspartyl protein carboxyl methyltransferase</fullName>
    </alternativeName>
    <alternativeName>
        <fullName evidence="1">Protein L-isoaspartyl methyltransferase</fullName>
    </alternativeName>
    <alternativeName>
        <fullName evidence="1">Protein-beta-aspartate methyltransferase</fullName>
        <shortName evidence="1">PIMT</shortName>
    </alternativeName>
</protein>
<accession>Q8P9Y6</accession>
<proteinExistence type="inferred from homology"/>
<comment type="function">
    <text evidence="1">Catalyzes the methyl esterification of L-isoaspartyl residues in peptides and proteins that result from spontaneous decomposition of normal L-aspartyl and L-asparaginyl residues. It plays a role in the repair and/or degradation of damaged proteins.</text>
</comment>
<comment type="catalytic activity">
    <reaction evidence="1">
        <text>[protein]-L-isoaspartate + S-adenosyl-L-methionine = [protein]-L-isoaspartate alpha-methyl ester + S-adenosyl-L-homocysteine</text>
        <dbReference type="Rhea" id="RHEA:12705"/>
        <dbReference type="Rhea" id="RHEA-COMP:12143"/>
        <dbReference type="Rhea" id="RHEA-COMP:12144"/>
        <dbReference type="ChEBI" id="CHEBI:57856"/>
        <dbReference type="ChEBI" id="CHEBI:59789"/>
        <dbReference type="ChEBI" id="CHEBI:90596"/>
        <dbReference type="ChEBI" id="CHEBI:90598"/>
        <dbReference type="EC" id="2.1.1.77"/>
    </reaction>
</comment>
<comment type="subcellular location">
    <subcellularLocation>
        <location evidence="1">Cytoplasm</location>
    </subcellularLocation>
</comment>
<comment type="similarity">
    <text evidence="1">Belongs to the methyltransferase superfamily. L-isoaspartyl/D-aspartyl protein methyltransferase family.</text>
</comment>
<gene>
    <name evidence="1" type="primary">pcm</name>
    <name type="ordered locus">XCC1707</name>
</gene>
<reference key="1">
    <citation type="journal article" date="2002" name="Nature">
        <title>Comparison of the genomes of two Xanthomonas pathogens with differing host specificities.</title>
        <authorList>
            <person name="da Silva A.C.R."/>
            <person name="Ferro J.A."/>
            <person name="Reinach F.C."/>
            <person name="Farah C.S."/>
            <person name="Furlan L.R."/>
            <person name="Quaggio R.B."/>
            <person name="Monteiro-Vitorello C.B."/>
            <person name="Van Sluys M.A."/>
            <person name="Almeida N.F. Jr."/>
            <person name="Alves L.M.C."/>
            <person name="do Amaral A.M."/>
            <person name="Bertolini M.C."/>
            <person name="Camargo L.E.A."/>
            <person name="Camarotte G."/>
            <person name="Cannavan F."/>
            <person name="Cardozo J."/>
            <person name="Chambergo F."/>
            <person name="Ciapina L.P."/>
            <person name="Cicarelli R.M.B."/>
            <person name="Coutinho L.L."/>
            <person name="Cursino-Santos J.R."/>
            <person name="El-Dorry H."/>
            <person name="Faria J.B."/>
            <person name="Ferreira A.J.S."/>
            <person name="Ferreira R.C.C."/>
            <person name="Ferro M.I.T."/>
            <person name="Formighieri E.F."/>
            <person name="Franco M.C."/>
            <person name="Greggio C.C."/>
            <person name="Gruber A."/>
            <person name="Katsuyama A.M."/>
            <person name="Kishi L.T."/>
            <person name="Leite R.P."/>
            <person name="Lemos E.G.M."/>
            <person name="Lemos M.V.F."/>
            <person name="Locali E.C."/>
            <person name="Machado M.A."/>
            <person name="Madeira A.M.B.N."/>
            <person name="Martinez-Rossi N.M."/>
            <person name="Martins E.C."/>
            <person name="Meidanis J."/>
            <person name="Menck C.F.M."/>
            <person name="Miyaki C.Y."/>
            <person name="Moon D.H."/>
            <person name="Moreira L.M."/>
            <person name="Novo M.T.M."/>
            <person name="Okura V.K."/>
            <person name="Oliveira M.C."/>
            <person name="Oliveira V.R."/>
            <person name="Pereira H.A."/>
            <person name="Rossi A."/>
            <person name="Sena J.A.D."/>
            <person name="Silva C."/>
            <person name="de Souza R.F."/>
            <person name="Spinola L.A.F."/>
            <person name="Takita M.A."/>
            <person name="Tamura R.E."/>
            <person name="Teixeira E.C."/>
            <person name="Tezza R.I.D."/>
            <person name="Trindade dos Santos M."/>
            <person name="Truffi D."/>
            <person name="Tsai S.M."/>
            <person name="White F.F."/>
            <person name="Setubal J.C."/>
            <person name="Kitajima J.P."/>
        </authorList>
    </citation>
    <scope>NUCLEOTIDE SEQUENCE [LARGE SCALE GENOMIC DNA]</scope>
    <source>
        <strain>ATCC 33913 / DSM 3586 / NCPPB 528 / LMG 568 / P 25</strain>
    </source>
</reference>
<keyword id="KW-0963">Cytoplasm</keyword>
<keyword id="KW-0489">Methyltransferase</keyword>
<keyword id="KW-1185">Reference proteome</keyword>
<keyword id="KW-0949">S-adenosyl-L-methionine</keyword>
<keyword id="KW-0808">Transferase</keyword>
<feature type="chain" id="PRO_0000351952" description="Protein-L-isoaspartate O-methyltransferase">
    <location>
        <begin position="1"/>
        <end position="225"/>
    </location>
</feature>
<feature type="active site" evidence="1">
    <location>
        <position position="75"/>
    </location>
</feature>
<name>PIMT_XANCP</name>